<protein>
    <recommendedName>
        <fullName evidence="1">Glutamyl-tRNA reductase</fullName>
        <shortName evidence="1">GluTR</shortName>
        <ecNumber evidence="1">1.2.1.70</ecNumber>
    </recommendedName>
</protein>
<feature type="chain" id="PRO_1000075425" description="Glutamyl-tRNA reductase">
    <location>
        <begin position="1"/>
        <end position="416"/>
    </location>
</feature>
<feature type="active site" description="Nucleophile" evidence="1">
    <location>
        <position position="50"/>
    </location>
</feature>
<feature type="binding site" evidence="1">
    <location>
        <begin position="49"/>
        <end position="52"/>
    </location>
    <ligand>
        <name>substrate</name>
    </ligand>
</feature>
<feature type="binding site" evidence="1">
    <location>
        <position position="105"/>
    </location>
    <ligand>
        <name>substrate</name>
    </ligand>
</feature>
<feature type="binding site" evidence="1">
    <location>
        <begin position="110"/>
        <end position="112"/>
    </location>
    <ligand>
        <name>substrate</name>
    </ligand>
</feature>
<feature type="binding site" evidence="1">
    <location>
        <position position="116"/>
    </location>
    <ligand>
        <name>substrate</name>
    </ligand>
</feature>
<feature type="binding site" evidence="1">
    <location>
        <begin position="185"/>
        <end position="190"/>
    </location>
    <ligand>
        <name>NADP(+)</name>
        <dbReference type="ChEBI" id="CHEBI:58349"/>
    </ligand>
</feature>
<feature type="site" description="Important for activity" evidence="1">
    <location>
        <position position="95"/>
    </location>
</feature>
<name>HEM1_SHEB9</name>
<accession>A9L2D5</accession>
<keyword id="KW-0521">NADP</keyword>
<keyword id="KW-0560">Oxidoreductase</keyword>
<keyword id="KW-0627">Porphyrin biosynthesis</keyword>
<reference key="1">
    <citation type="submission" date="2007-11" db="EMBL/GenBank/DDBJ databases">
        <title>Complete sequence of chromosome of Shewanella baltica OS195.</title>
        <authorList>
            <consortium name="US DOE Joint Genome Institute"/>
            <person name="Copeland A."/>
            <person name="Lucas S."/>
            <person name="Lapidus A."/>
            <person name="Barry K."/>
            <person name="Glavina del Rio T."/>
            <person name="Dalin E."/>
            <person name="Tice H."/>
            <person name="Pitluck S."/>
            <person name="Chain P."/>
            <person name="Malfatti S."/>
            <person name="Shin M."/>
            <person name="Vergez L."/>
            <person name="Schmutz J."/>
            <person name="Larimer F."/>
            <person name="Land M."/>
            <person name="Hauser L."/>
            <person name="Kyrpides N."/>
            <person name="Kim E."/>
            <person name="Brettar I."/>
            <person name="Rodrigues J."/>
            <person name="Konstantinidis K."/>
            <person name="Klappenbach J."/>
            <person name="Hofle M."/>
            <person name="Tiedje J."/>
            <person name="Richardson P."/>
        </authorList>
    </citation>
    <scope>NUCLEOTIDE SEQUENCE [LARGE SCALE GENOMIC DNA]</scope>
    <source>
        <strain>OS195</strain>
    </source>
</reference>
<dbReference type="EC" id="1.2.1.70" evidence="1"/>
<dbReference type="EMBL" id="CP000891">
    <property type="protein sequence ID" value="ABX50898.1"/>
    <property type="molecule type" value="Genomic_DNA"/>
</dbReference>
<dbReference type="RefSeq" id="WP_006084077.1">
    <property type="nucleotide sequence ID" value="NC_009997.1"/>
</dbReference>
<dbReference type="SMR" id="A9L2D5"/>
<dbReference type="GeneID" id="11774974"/>
<dbReference type="KEGG" id="sbn:Sbal195_3738"/>
<dbReference type="HOGENOM" id="CLU_035113_2_2_6"/>
<dbReference type="UniPathway" id="UPA00251">
    <property type="reaction ID" value="UER00316"/>
</dbReference>
<dbReference type="Proteomes" id="UP000000770">
    <property type="component" value="Chromosome"/>
</dbReference>
<dbReference type="GO" id="GO:0008883">
    <property type="term" value="F:glutamyl-tRNA reductase activity"/>
    <property type="evidence" value="ECO:0007669"/>
    <property type="project" value="UniProtKB-UniRule"/>
</dbReference>
<dbReference type="GO" id="GO:0050661">
    <property type="term" value="F:NADP binding"/>
    <property type="evidence" value="ECO:0007669"/>
    <property type="project" value="InterPro"/>
</dbReference>
<dbReference type="GO" id="GO:0019353">
    <property type="term" value="P:protoporphyrinogen IX biosynthetic process from glutamate"/>
    <property type="evidence" value="ECO:0007669"/>
    <property type="project" value="TreeGrafter"/>
</dbReference>
<dbReference type="CDD" id="cd05213">
    <property type="entry name" value="NAD_bind_Glutamyl_tRNA_reduct"/>
    <property type="match status" value="1"/>
</dbReference>
<dbReference type="FunFam" id="3.30.460.30:FF:000001">
    <property type="entry name" value="Glutamyl-tRNA reductase"/>
    <property type="match status" value="1"/>
</dbReference>
<dbReference type="FunFam" id="3.40.50.720:FF:000031">
    <property type="entry name" value="Glutamyl-tRNA reductase"/>
    <property type="match status" value="1"/>
</dbReference>
<dbReference type="Gene3D" id="3.30.460.30">
    <property type="entry name" value="Glutamyl-tRNA reductase, N-terminal domain"/>
    <property type="match status" value="1"/>
</dbReference>
<dbReference type="Gene3D" id="3.40.50.720">
    <property type="entry name" value="NAD(P)-binding Rossmann-like Domain"/>
    <property type="match status" value="1"/>
</dbReference>
<dbReference type="HAMAP" id="MF_00087">
    <property type="entry name" value="Glu_tRNA_reductase"/>
    <property type="match status" value="1"/>
</dbReference>
<dbReference type="InterPro" id="IPR000343">
    <property type="entry name" value="4pyrrol_synth_GluRdtase"/>
</dbReference>
<dbReference type="InterPro" id="IPR015896">
    <property type="entry name" value="4pyrrol_synth_GluRdtase_dimer"/>
</dbReference>
<dbReference type="InterPro" id="IPR015895">
    <property type="entry name" value="4pyrrol_synth_GluRdtase_N"/>
</dbReference>
<dbReference type="InterPro" id="IPR018214">
    <property type="entry name" value="GluRdtase_CS"/>
</dbReference>
<dbReference type="InterPro" id="IPR036453">
    <property type="entry name" value="GluRdtase_dimer_dom_sf"/>
</dbReference>
<dbReference type="InterPro" id="IPR036343">
    <property type="entry name" value="GluRdtase_N_sf"/>
</dbReference>
<dbReference type="InterPro" id="IPR036291">
    <property type="entry name" value="NAD(P)-bd_dom_sf"/>
</dbReference>
<dbReference type="InterPro" id="IPR006151">
    <property type="entry name" value="Shikm_DH/Glu-tRNA_Rdtase"/>
</dbReference>
<dbReference type="NCBIfam" id="TIGR01035">
    <property type="entry name" value="hemA"/>
    <property type="match status" value="1"/>
</dbReference>
<dbReference type="PANTHER" id="PTHR43013">
    <property type="entry name" value="GLUTAMYL-TRNA REDUCTASE"/>
    <property type="match status" value="1"/>
</dbReference>
<dbReference type="PANTHER" id="PTHR43013:SF1">
    <property type="entry name" value="GLUTAMYL-TRNA REDUCTASE"/>
    <property type="match status" value="1"/>
</dbReference>
<dbReference type="Pfam" id="PF00745">
    <property type="entry name" value="GlutR_dimer"/>
    <property type="match status" value="1"/>
</dbReference>
<dbReference type="Pfam" id="PF05201">
    <property type="entry name" value="GlutR_N"/>
    <property type="match status" value="1"/>
</dbReference>
<dbReference type="Pfam" id="PF01488">
    <property type="entry name" value="Shikimate_DH"/>
    <property type="match status" value="1"/>
</dbReference>
<dbReference type="PIRSF" id="PIRSF000445">
    <property type="entry name" value="4pyrrol_synth_GluRdtase"/>
    <property type="match status" value="1"/>
</dbReference>
<dbReference type="SUPFAM" id="SSF69742">
    <property type="entry name" value="Glutamyl tRNA-reductase catalytic, N-terminal domain"/>
    <property type="match status" value="1"/>
</dbReference>
<dbReference type="SUPFAM" id="SSF69075">
    <property type="entry name" value="Glutamyl tRNA-reductase dimerization domain"/>
    <property type="match status" value="1"/>
</dbReference>
<dbReference type="SUPFAM" id="SSF51735">
    <property type="entry name" value="NAD(P)-binding Rossmann-fold domains"/>
    <property type="match status" value="1"/>
</dbReference>
<dbReference type="PROSITE" id="PS00747">
    <property type="entry name" value="GLUTR"/>
    <property type="match status" value="1"/>
</dbReference>
<evidence type="ECO:0000255" key="1">
    <source>
        <dbReference type="HAMAP-Rule" id="MF_00087"/>
    </source>
</evidence>
<comment type="function">
    <text evidence="1">Catalyzes the NADPH-dependent reduction of glutamyl-tRNA(Glu) to glutamate 1-semialdehyde (GSA).</text>
</comment>
<comment type="catalytic activity">
    <reaction evidence="1">
        <text>(S)-4-amino-5-oxopentanoate + tRNA(Glu) + NADP(+) = L-glutamyl-tRNA(Glu) + NADPH + H(+)</text>
        <dbReference type="Rhea" id="RHEA:12344"/>
        <dbReference type="Rhea" id="RHEA-COMP:9663"/>
        <dbReference type="Rhea" id="RHEA-COMP:9680"/>
        <dbReference type="ChEBI" id="CHEBI:15378"/>
        <dbReference type="ChEBI" id="CHEBI:57501"/>
        <dbReference type="ChEBI" id="CHEBI:57783"/>
        <dbReference type="ChEBI" id="CHEBI:58349"/>
        <dbReference type="ChEBI" id="CHEBI:78442"/>
        <dbReference type="ChEBI" id="CHEBI:78520"/>
        <dbReference type="EC" id="1.2.1.70"/>
    </reaction>
</comment>
<comment type="pathway">
    <text evidence="1">Porphyrin-containing compound metabolism; protoporphyrin-IX biosynthesis; 5-aminolevulinate from L-glutamyl-tRNA(Glu): step 1/2.</text>
</comment>
<comment type="subunit">
    <text evidence="1">Homodimer.</text>
</comment>
<comment type="domain">
    <text evidence="1">Possesses an unusual extended V-shaped dimeric structure with each monomer consisting of three distinct domains arranged along a curved 'spinal' alpha-helix. The N-terminal catalytic domain specifically recognizes the glutamate moiety of the substrate. The second domain is the NADPH-binding domain, and the third C-terminal domain is responsible for dimerization.</text>
</comment>
<comment type="miscellaneous">
    <text evidence="1">During catalysis, the active site Cys acts as a nucleophile attacking the alpha-carbonyl group of tRNA-bound glutamate with the formation of a thioester intermediate between enzyme and glutamate, and the concomitant release of tRNA(Glu). The thioester intermediate is finally reduced by direct hydride transfer from NADPH, to form the product GSA.</text>
</comment>
<comment type="similarity">
    <text evidence="1">Belongs to the glutamyl-tRNA reductase family.</text>
</comment>
<organism>
    <name type="scientific">Shewanella baltica (strain OS195)</name>
    <dbReference type="NCBI Taxonomy" id="399599"/>
    <lineage>
        <taxon>Bacteria</taxon>
        <taxon>Pseudomonadati</taxon>
        <taxon>Pseudomonadota</taxon>
        <taxon>Gammaproteobacteria</taxon>
        <taxon>Alteromonadales</taxon>
        <taxon>Shewanellaceae</taxon>
        <taxon>Shewanella</taxon>
    </lineage>
</organism>
<proteinExistence type="inferred from homology"/>
<sequence>MSLVAIGINHKTATVDLREKVAFSPDKIHDAMKSLASRTRSGEAVIVSTCNRTELYCNNGDEADIIAWLEEYHGLDHKDVAPCLYNYHGQDAVRHLMRVASGLDSLILGEPQILGQVKQAFVKAKEAGTVALTIDRLFQNTFSVAKKVRTDTEIGAAAVSVAFAAVSMAKHIFSSISTTKVLLIGAGETIELVAKHLKDNGVASMVVANRTLERAQGMCEEFGATAITLAQIPDYLPKADIVISSTASPLPILGKGMVEKALKQRRHQPMLLVDIAVPRDIEPEVADLDDAFLYTVDDLHSIIEQNMASRKEAAEQAEVITEEQSFLFMDWIRSLESVDSIREYRSQSMAVKDELVERALNKLAQGSDTEQVLIELANRLTNKLIHAPTQALTAASRQGDLNTLGQLRSALGLDKN</sequence>
<gene>
    <name evidence="1" type="primary">hemA</name>
    <name type="ordered locus">Sbal195_3738</name>
</gene>